<gene>
    <name evidence="1" type="primary">kup</name>
    <name type="ordered locus">A2cp1_1007</name>
</gene>
<feature type="chain" id="PRO_1000185112" description="Probable potassium transport system protein Kup">
    <location>
        <begin position="1"/>
        <end position="671"/>
    </location>
</feature>
<feature type="transmembrane region" description="Helical" evidence="1">
    <location>
        <begin position="52"/>
        <end position="72"/>
    </location>
</feature>
<feature type="transmembrane region" description="Helical" evidence="1">
    <location>
        <begin position="92"/>
        <end position="112"/>
    </location>
</feature>
<feature type="transmembrane region" description="Helical" evidence="1">
    <location>
        <begin position="147"/>
        <end position="167"/>
    </location>
</feature>
<feature type="transmembrane region" description="Helical" evidence="1">
    <location>
        <begin position="181"/>
        <end position="201"/>
    </location>
</feature>
<feature type="transmembrane region" description="Helical" evidence="1">
    <location>
        <begin position="209"/>
        <end position="229"/>
    </location>
</feature>
<feature type="transmembrane region" description="Helical" evidence="1">
    <location>
        <begin position="255"/>
        <end position="275"/>
    </location>
</feature>
<feature type="transmembrane region" description="Helical" evidence="1">
    <location>
        <begin position="291"/>
        <end position="311"/>
    </location>
</feature>
<feature type="transmembrane region" description="Helical" evidence="1">
    <location>
        <begin position="323"/>
        <end position="343"/>
    </location>
</feature>
<feature type="transmembrane region" description="Helical" evidence="1">
    <location>
        <begin position="381"/>
        <end position="401"/>
    </location>
</feature>
<feature type="transmembrane region" description="Helical" evidence="1">
    <location>
        <begin position="407"/>
        <end position="427"/>
    </location>
</feature>
<feature type="transmembrane region" description="Helical" evidence="1">
    <location>
        <begin position="441"/>
        <end position="461"/>
    </location>
</feature>
<feature type="transmembrane region" description="Helical" evidence="1">
    <location>
        <begin position="465"/>
        <end position="485"/>
    </location>
</feature>
<feature type="region of interest" description="Disordered" evidence="2">
    <location>
        <begin position="1"/>
        <end position="43"/>
    </location>
</feature>
<feature type="compositionally biased region" description="Low complexity" evidence="2">
    <location>
        <begin position="10"/>
        <end position="37"/>
    </location>
</feature>
<protein>
    <recommendedName>
        <fullName evidence="1">Probable potassium transport system protein Kup</fullName>
    </recommendedName>
</protein>
<sequence length="671" mass="71840">MSQIPSPNDPASTGAAPSSAAVPAGPSATPAPSPTAGFSLPGHRPPPSGKALAALAVGALGVVYGDIGTSPLYSLKECFGGPHGVRPTDANVLGVLSLVFWAMTFVVTFKYMSFVMRADNRGEGGILALMALVGKTETTRLGRRMLLMLGLFGAALLYGDGIITPAISVLGAVEGVAVAAPAMERAVVPATVVILVFLFLFQKQGTAKVGAVFGPVMLVWFATIAVLGVRGILHDPTILRALLPTHGLSFFARNGWHGFLVLGGVVLVITGGEALYADMGHFGKRPIRVAWLGLAMPALLLNYLGQGALLLHDPGAARNPFYLLAPEWALYPTIAIATAAAIVASQALISGAYSLTQQAIQLGYSPRVTIRHTSQREIGQIYLPEVNWMLGTACLALVLGFQTSSRLASAYGIAVTGTMIVTTLLFHRVMRDRWGWARWKAWPLTVLFLTVDAAFFLANVVKFRDGGWFPIAAAALVFTLMSTWKRGRDALALMLKDAGLPLDLFMADVARRKVQRVAGTAVFMTSNPGGVPPVLLHHLKHNKVLHERVVLVSILAHEIPFVNEPERVNARELGSGFFQVIAHYGFMETPDVPALLDSLPRRELAGPRLTIVPMETTYFLGRETLLANGPSTIPTWRKRLFIVMARNAQTASAFFGLPPNRVVEMGAQIQL</sequence>
<reference key="1">
    <citation type="submission" date="2009-01" db="EMBL/GenBank/DDBJ databases">
        <title>Complete sequence of Anaeromyxobacter dehalogenans 2CP-1.</title>
        <authorList>
            <person name="Lucas S."/>
            <person name="Copeland A."/>
            <person name="Lapidus A."/>
            <person name="Glavina del Rio T."/>
            <person name="Dalin E."/>
            <person name="Tice H."/>
            <person name="Bruce D."/>
            <person name="Goodwin L."/>
            <person name="Pitluck S."/>
            <person name="Saunders E."/>
            <person name="Brettin T."/>
            <person name="Detter J.C."/>
            <person name="Han C."/>
            <person name="Larimer F."/>
            <person name="Land M."/>
            <person name="Hauser L."/>
            <person name="Kyrpides N."/>
            <person name="Ovchinnikova G."/>
            <person name="Beliaev A.S."/>
            <person name="Richardson P."/>
        </authorList>
    </citation>
    <scope>NUCLEOTIDE SEQUENCE [LARGE SCALE GENOMIC DNA]</scope>
    <source>
        <strain>2CP-1 / ATCC BAA-258</strain>
    </source>
</reference>
<accession>B8JF01</accession>
<name>KUP_ANAD2</name>
<keyword id="KW-0997">Cell inner membrane</keyword>
<keyword id="KW-1003">Cell membrane</keyword>
<keyword id="KW-0406">Ion transport</keyword>
<keyword id="KW-0472">Membrane</keyword>
<keyword id="KW-0630">Potassium</keyword>
<keyword id="KW-0633">Potassium transport</keyword>
<keyword id="KW-0769">Symport</keyword>
<keyword id="KW-0812">Transmembrane</keyword>
<keyword id="KW-1133">Transmembrane helix</keyword>
<keyword id="KW-0813">Transport</keyword>
<dbReference type="EMBL" id="CP001359">
    <property type="protein sequence ID" value="ACL64358.1"/>
    <property type="molecule type" value="Genomic_DNA"/>
</dbReference>
<dbReference type="RefSeq" id="WP_012632355.1">
    <property type="nucleotide sequence ID" value="NC_011891.1"/>
</dbReference>
<dbReference type="KEGG" id="acp:A2cp1_1007"/>
<dbReference type="HOGENOM" id="CLU_008142_4_2_7"/>
<dbReference type="Proteomes" id="UP000007089">
    <property type="component" value="Chromosome"/>
</dbReference>
<dbReference type="GO" id="GO:0005886">
    <property type="term" value="C:plasma membrane"/>
    <property type="evidence" value="ECO:0007669"/>
    <property type="project" value="UniProtKB-SubCell"/>
</dbReference>
<dbReference type="GO" id="GO:0015079">
    <property type="term" value="F:potassium ion transmembrane transporter activity"/>
    <property type="evidence" value="ECO:0007669"/>
    <property type="project" value="UniProtKB-UniRule"/>
</dbReference>
<dbReference type="GO" id="GO:0015293">
    <property type="term" value="F:symporter activity"/>
    <property type="evidence" value="ECO:0007669"/>
    <property type="project" value="UniProtKB-UniRule"/>
</dbReference>
<dbReference type="HAMAP" id="MF_01522">
    <property type="entry name" value="Kup"/>
    <property type="match status" value="1"/>
</dbReference>
<dbReference type="InterPro" id="IPR003855">
    <property type="entry name" value="K+_transporter"/>
</dbReference>
<dbReference type="InterPro" id="IPR053952">
    <property type="entry name" value="K_trans_C"/>
</dbReference>
<dbReference type="InterPro" id="IPR053951">
    <property type="entry name" value="K_trans_N"/>
</dbReference>
<dbReference type="InterPro" id="IPR023051">
    <property type="entry name" value="Kup"/>
</dbReference>
<dbReference type="PANTHER" id="PTHR30540:SF79">
    <property type="entry name" value="LOW AFFINITY POTASSIUM TRANSPORT SYSTEM PROTEIN KUP"/>
    <property type="match status" value="1"/>
</dbReference>
<dbReference type="PANTHER" id="PTHR30540">
    <property type="entry name" value="OSMOTIC STRESS POTASSIUM TRANSPORTER"/>
    <property type="match status" value="1"/>
</dbReference>
<dbReference type="Pfam" id="PF02705">
    <property type="entry name" value="K_trans"/>
    <property type="match status" value="1"/>
</dbReference>
<dbReference type="Pfam" id="PF22776">
    <property type="entry name" value="K_trans_C"/>
    <property type="match status" value="1"/>
</dbReference>
<comment type="function">
    <text evidence="1">Transport of potassium into the cell. Likely operates as a K(+):H(+) symporter.</text>
</comment>
<comment type="catalytic activity">
    <reaction evidence="1">
        <text>K(+)(in) + H(+)(in) = K(+)(out) + H(+)(out)</text>
        <dbReference type="Rhea" id="RHEA:28490"/>
        <dbReference type="ChEBI" id="CHEBI:15378"/>
        <dbReference type="ChEBI" id="CHEBI:29103"/>
    </reaction>
    <physiologicalReaction direction="right-to-left" evidence="1">
        <dbReference type="Rhea" id="RHEA:28492"/>
    </physiologicalReaction>
</comment>
<comment type="subcellular location">
    <subcellularLocation>
        <location evidence="1">Cell inner membrane</location>
        <topology evidence="1">Multi-pass membrane protein</topology>
    </subcellularLocation>
</comment>
<comment type="similarity">
    <text evidence="1">Belongs to the HAK/KUP transporter (TC 2.A.72) family.</text>
</comment>
<evidence type="ECO:0000255" key="1">
    <source>
        <dbReference type="HAMAP-Rule" id="MF_01522"/>
    </source>
</evidence>
<evidence type="ECO:0000256" key="2">
    <source>
        <dbReference type="SAM" id="MobiDB-lite"/>
    </source>
</evidence>
<organism>
    <name type="scientific">Anaeromyxobacter dehalogenans (strain 2CP-1 / ATCC BAA-258)</name>
    <dbReference type="NCBI Taxonomy" id="455488"/>
    <lineage>
        <taxon>Bacteria</taxon>
        <taxon>Pseudomonadati</taxon>
        <taxon>Myxococcota</taxon>
        <taxon>Myxococcia</taxon>
        <taxon>Myxococcales</taxon>
        <taxon>Cystobacterineae</taxon>
        <taxon>Anaeromyxobacteraceae</taxon>
        <taxon>Anaeromyxobacter</taxon>
    </lineage>
</organism>
<proteinExistence type="inferred from homology"/>